<keyword id="KW-1185">Reference proteome</keyword>
<keyword id="KW-0687">Ribonucleoprotein</keyword>
<keyword id="KW-0689">Ribosomal protein</keyword>
<feature type="chain" id="PRO_0000261750" description="Large ribosomal subunit protein uL13">
    <location>
        <begin position="1"/>
        <end position="142"/>
    </location>
</feature>
<evidence type="ECO:0000255" key="1">
    <source>
        <dbReference type="HAMAP-Rule" id="MF_01366"/>
    </source>
</evidence>
<evidence type="ECO:0000305" key="2"/>
<name>RL13_METCA</name>
<comment type="function">
    <text evidence="1">This protein is one of the early assembly proteins of the 50S ribosomal subunit, although it is not seen to bind rRNA by itself. It is important during the early stages of 50S assembly.</text>
</comment>
<comment type="subunit">
    <text evidence="1">Part of the 50S ribosomal subunit.</text>
</comment>
<comment type="similarity">
    <text evidence="1">Belongs to the universal ribosomal protein uL13 family.</text>
</comment>
<accession>Q60AF8</accession>
<reference key="1">
    <citation type="journal article" date="2004" name="PLoS Biol.">
        <title>Genomic insights into methanotrophy: the complete genome sequence of Methylococcus capsulatus (Bath).</title>
        <authorList>
            <person name="Ward N.L."/>
            <person name="Larsen O."/>
            <person name="Sakwa J."/>
            <person name="Bruseth L."/>
            <person name="Khouri H.M."/>
            <person name="Durkin A.S."/>
            <person name="Dimitrov G."/>
            <person name="Jiang L."/>
            <person name="Scanlan D."/>
            <person name="Kang K.H."/>
            <person name="Lewis M.R."/>
            <person name="Nelson K.E."/>
            <person name="Methe B.A."/>
            <person name="Wu M."/>
            <person name="Heidelberg J.F."/>
            <person name="Paulsen I.T."/>
            <person name="Fouts D.E."/>
            <person name="Ravel J."/>
            <person name="Tettelin H."/>
            <person name="Ren Q."/>
            <person name="Read T.D."/>
            <person name="DeBoy R.T."/>
            <person name="Seshadri R."/>
            <person name="Salzberg S.L."/>
            <person name="Jensen H.B."/>
            <person name="Birkeland N.K."/>
            <person name="Nelson W.C."/>
            <person name="Dodson R.J."/>
            <person name="Grindhaug S.H."/>
            <person name="Holt I.E."/>
            <person name="Eidhammer I."/>
            <person name="Jonasen I."/>
            <person name="Vanaken S."/>
            <person name="Utterback T.R."/>
            <person name="Feldblyum T.V."/>
            <person name="Fraser C.M."/>
            <person name="Lillehaug J.R."/>
            <person name="Eisen J.A."/>
        </authorList>
    </citation>
    <scope>NUCLEOTIDE SEQUENCE [LARGE SCALE GENOMIC DNA]</scope>
    <source>
        <strain>ATCC 33009 / NCIMB 11132 / Bath</strain>
    </source>
</reference>
<gene>
    <name evidence="1" type="primary">rplM</name>
    <name type="ordered locus">MCA0904</name>
</gene>
<dbReference type="EMBL" id="AE017282">
    <property type="protein sequence ID" value="AAU92852.1"/>
    <property type="molecule type" value="Genomic_DNA"/>
</dbReference>
<dbReference type="RefSeq" id="WP_010960215.1">
    <property type="nucleotide sequence ID" value="NC_002977.6"/>
</dbReference>
<dbReference type="SMR" id="Q60AF8"/>
<dbReference type="STRING" id="243233.MCA0904"/>
<dbReference type="GeneID" id="88223207"/>
<dbReference type="KEGG" id="mca:MCA0904"/>
<dbReference type="eggNOG" id="COG0102">
    <property type="taxonomic scope" value="Bacteria"/>
</dbReference>
<dbReference type="HOGENOM" id="CLU_082184_2_2_6"/>
<dbReference type="Proteomes" id="UP000006821">
    <property type="component" value="Chromosome"/>
</dbReference>
<dbReference type="GO" id="GO:0022625">
    <property type="term" value="C:cytosolic large ribosomal subunit"/>
    <property type="evidence" value="ECO:0007669"/>
    <property type="project" value="TreeGrafter"/>
</dbReference>
<dbReference type="GO" id="GO:0003729">
    <property type="term" value="F:mRNA binding"/>
    <property type="evidence" value="ECO:0007669"/>
    <property type="project" value="TreeGrafter"/>
</dbReference>
<dbReference type="GO" id="GO:0003735">
    <property type="term" value="F:structural constituent of ribosome"/>
    <property type="evidence" value="ECO:0007669"/>
    <property type="project" value="InterPro"/>
</dbReference>
<dbReference type="GO" id="GO:0017148">
    <property type="term" value="P:negative regulation of translation"/>
    <property type="evidence" value="ECO:0007669"/>
    <property type="project" value="TreeGrafter"/>
</dbReference>
<dbReference type="GO" id="GO:0006412">
    <property type="term" value="P:translation"/>
    <property type="evidence" value="ECO:0007669"/>
    <property type="project" value="UniProtKB-UniRule"/>
</dbReference>
<dbReference type="CDD" id="cd00392">
    <property type="entry name" value="Ribosomal_L13"/>
    <property type="match status" value="1"/>
</dbReference>
<dbReference type="FunFam" id="3.90.1180.10:FF:000001">
    <property type="entry name" value="50S ribosomal protein L13"/>
    <property type="match status" value="1"/>
</dbReference>
<dbReference type="Gene3D" id="3.90.1180.10">
    <property type="entry name" value="Ribosomal protein L13"/>
    <property type="match status" value="1"/>
</dbReference>
<dbReference type="HAMAP" id="MF_01366">
    <property type="entry name" value="Ribosomal_uL13"/>
    <property type="match status" value="1"/>
</dbReference>
<dbReference type="InterPro" id="IPR005822">
    <property type="entry name" value="Ribosomal_uL13"/>
</dbReference>
<dbReference type="InterPro" id="IPR005823">
    <property type="entry name" value="Ribosomal_uL13_bac-type"/>
</dbReference>
<dbReference type="InterPro" id="IPR023563">
    <property type="entry name" value="Ribosomal_uL13_CS"/>
</dbReference>
<dbReference type="InterPro" id="IPR036899">
    <property type="entry name" value="Ribosomal_uL13_sf"/>
</dbReference>
<dbReference type="NCBIfam" id="TIGR01066">
    <property type="entry name" value="rplM_bact"/>
    <property type="match status" value="1"/>
</dbReference>
<dbReference type="PANTHER" id="PTHR11545:SF2">
    <property type="entry name" value="LARGE RIBOSOMAL SUBUNIT PROTEIN UL13M"/>
    <property type="match status" value="1"/>
</dbReference>
<dbReference type="PANTHER" id="PTHR11545">
    <property type="entry name" value="RIBOSOMAL PROTEIN L13"/>
    <property type="match status" value="1"/>
</dbReference>
<dbReference type="Pfam" id="PF00572">
    <property type="entry name" value="Ribosomal_L13"/>
    <property type="match status" value="1"/>
</dbReference>
<dbReference type="PIRSF" id="PIRSF002181">
    <property type="entry name" value="Ribosomal_L13"/>
    <property type="match status" value="1"/>
</dbReference>
<dbReference type="SUPFAM" id="SSF52161">
    <property type="entry name" value="Ribosomal protein L13"/>
    <property type="match status" value="1"/>
</dbReference>
<dbReference type="PROSITE" id="PS00783">
    <property type="entry name" value="RIBOSOMAL_L13"/>
    <property type="match status" value="1"/>
</dbReference>
<organism>
    <name type="scientific">Methylococcus capsulatus (strain ATCC 33009 / NCIMB 11132 / Bath)</name>
    <dbReference type="NCBI Taxonomy" id="243233"/>
    <lineage>
        <taxon>Bacteria</taxon>
        <taxon>Pseudomonadati</taxon>
        <taxon>Pseudomonadota</taxon>
        <taxon>Gammaproteobacteria</taxon>
        <taxon>Methylococcales</taxon>
        <taxon>Methylococcaceae</taxon>
        <taxon>Methylococcus</taxon>
    </lineage>
</organism>
<sequence>MKTFSAKPAEVKRDWYVVDAEGKTLGRLSTEIARRLRGKHKPEYTPHVDTGDYIVVVNAEKVRVTGNKEQDKIYYKHTGYIGNMKSISLGKLRDRRPELIIETAVKGMLPKNPLGRAMFRKLKVYAGPSHQHQAQQPKPLEI</sequence>
<proteinExistence type="inferred from homology"/>
<protein>
    <recommendedName>
        <fullName evidence="1">Large ribosomal subunit protein uL13</fullName>
    </recommendedName>
    <alternativeName>
        <fullName evidence="2">50S ribosomal protein L13</fullName>
    </alternativeName>
</protein>